<name>YCF60_CYACA</name>
<reference key="1">
    <citation type="journal article" date="2000" name="J. Mol. Evol.">
        <title>The structure and gene repertoire of an ancient red algal plastid genome.</title>
        <authorList>
            <person name="Gloeckner G."/>
            <person name="Rosenthal A."/>
            <person name="Valentin K.-U."/>
        </authorList>
    </citation>
    <scope>NUCLEOTIDE SEQUENCE [LARGE SCALE GENOMIC DNA]</scope>
    <source>
        <strain>RK-1</strain>
    </source>
</reference>
<accession>O19916</accession>
<evidence type="ECO:0000255" key="1"/>
<evidence type="ECO:0000305" key="2"/>
<proteinExistence type="inferred from homology"/>
<protein>
    <recommendedName>
        <fullName>Tic20 family protein Ycf60</fullName>
    </recommendedName>
</protein>
<keyword id="KW-0150">Chloroplast</keyword>
<keyword id="KW-0472">Membrane</keyword>
<keyword id="KW-0934">Plastid</keyword>
<keyword id="KW-0812">Transmembrane</keyword>
<keyword id="KW-1133">Transmembrane helix</keyword>
<dbReference type="EMBL" id="AF022186">
    <property type="protein sequence ID" value="AAB82673.1"/>
    <property type="molecule type" value="Genomic_DNA"/>
</dbReference>
<dbReference type="PIR" id="T11984">
    <property type="entry name" value="T11984"/>
</dbReference>
<dbReference type="RefSeq" id="NP_045088.1">
    <property type="nucleotide sequence ID" value="NC_001840.1"/>
</dbReference>
<dbReference type="SMR" id="O19916"/>
<dbReference type="GeneID" id="800165"/>
<dbReference type="GO" id="GO:0031969">
    <property type="term" value="C:chloroplast membrane"/>
    <property type="evidence" value="ECO:0007669"/>
    <property type="project" value="UniProtKB-SubCell"/>
</dbReference>
<dbReference type="InterPro" id="IPR005691">
    <property type="entry name" value="Tic20"/>
</dbReference>
<dbReference type="PANTHER" id="PTHR33510">
    <property type="entry name" value="PROTEIN TIC 20-II, CHLOROPLASTIC"/>
    <property type="match status" value="1"/>
</dbReference>
<dbReference type="PANTHER" id="PTHR33510:SF5">
    <property type="entry name" value="PROTEIN TIC 20-II, CHLOROPLASTIC"/>
    <property type="match status" value="1"/>
</dbReference>
<dbReference type="Pfam" id="PF16166">
    <property type="entry name" value="TIC20"/>
    <property type="match status" value="1"/>
</dbReference>
<organism>
    <name type="scientific">Cyanidium caldarium</name>
    <name type="common">Red alga</name>
    <dbReference type="NCBI Taxonomy" id="2771"/>
    <lineage>
        <taxon>Eukaryota</taxon>
        <taxon>Rhodophyta</taxon>
        <taxon>Bangiophyceae</taxon>
        <taxon>Cyanidiales</taxon>
        <taxon>Cyanidiaceae</taxon>
        <taxon>Cyanidium</taxon>
    </lineage>
</organism>
<comment type="subcellular location">
    <subcellularLocation>
        <location evidence="2">Plastid</location>
        <location evidence="2">Chloroplast membrane</location>
        <topology evidence="2">Multi-pass membrane protein</topology>
    </subcellularLocation>
</comment>
<comment type="similarity">
    <text evidence="2">Belongs to the Tic20 family.</text>
</comment>
<gene>
    <name type="primary">ycf60</name>
</gene>
<geneLocation type="chloroplast"/>
<feature type="chain" id="PRO_0000277371" description="Tic20 family protein Ycf60">
    <location>
        <begin position="1"/>
        <end position="205"/>
    </location>
</feature>
<feature type="transmembrane region" description="Helical" evidence="1">
    <location>
        <begin position="5"/>
        <end position="25"/>
    </location>
</feature>
<feature type="transmembrane region" description="Helical" evidence="1">
    <location>
        <begin position="54"/>
        <end position="74"/>
    </location>
</feature>
<feature type="transmembrane region" description="Helical" evidence="1">
    <location>
        <begin position="102"/>
        <end position="122"/>
    </location>
</feature>
<feature type="transmembrane region" description="Helical" evidence="1">
    <location>
        <begin position="130"/>
        <end position="150"/>
    </location>
</feature>
<feature type="transmembrane region" description="Helical" evidence="1">
    <location>
        <begin position="163"/>
        <end position="183"/>
    </location>
</feature>
<sequence>MRINLFVNILFGTACIIIFGLVILISYKLYRYIPKRNNSNKVYKEDYPSIMARAISCLIYFLPLLEGIAQFGIVCIDDHSWIRIIYKNTLAYIVVPYLESPLIGFCIFITLYLIFVRGIIQISKFIKFHIVQALLLYLLDSVIGTVLTSLPLEIGYSFIGDRLADTLLLITFMISIYAGTDALKGQYSNIPLISEAAKMQSKSTD</sequence>